<feature type="signal peptide" evidence="8">
    <location>
        <begin position="1"/>
        <end position="19"/>
    </location>
</feature>
<feature type="chain" id="PRO_0000247825" description="CMRF35-like molecule 1">
    <location>
        <begin position="20"/>
        <end position="290"/>
    </location>
</feature>
<feature type="topological domain" description="Extracellular" evidence="2">
    <location>
        <begin position="20"/>
        <end position="156"/>
    </location>
</feature>
<feature type="transmembrane region" description="Helical" evidence="2">
    <location>
        <begin position="157"/>
        <end position="177"/>
    </location>
</feature>
<feature type="topological domain" description="Cytoplasmic" evidence="2">
    <location>
        <begin position="178"/>
        <end position="290"/>
    </location>
</feature>
<feature type="domain" description="Ig-like V-type">
    <location>
        <begin position="20"/>
        <end position="126"/>
    </location>
</feature>
<feature type="region of interest" description="Disordered" evidence="4">
    <location>
        <begin position="267"/>
        <end position="290"/>
    </location>
</feature>
<feature type="site" description="Phosphatase-binding">
    <location>
        <position position="205"/>
    </location>
</feature>
<feature type="glycosylation site" description="N-linked (GlcNAc...) asparagine" evidence="2">
    <location>
        <position position="88"/>
    </location>
</feature>
<feature type="disulfide bond" evidence="3 11">
    <location>
        <begin position="40"/>
        <end position="108"/>
    </location>
</feature>
<feature type="disulfide bond" evidence="3 11">
    <location>
        <begin position="54"/>
        <end position="62"/>
    </location>
</feature>
<feature type="splice variant" id="VSP_020056" description="In isoform 2, isoform 3, isoform 4 and isoform 6." evidence="16 17 18">
    <original>MPLLTLYLLLFWLS</original>
    <variation>MWLPQLDLMRVISAKSQ</variation>
    <location>
        <begin position="1"/>
        <end position="14"/>
    </location>
</feature>
<feature type="splice variant" id="VSP_020057" description="In isoform 2." evidence="18">
    <original>A</original>
    <variation>ASTPAPTTPTSTTFTA</variation>
    <location>
        <position position="128"/>
    </location>
</feature>
<feature type="splice variant" id="VSP_020058" description="In isoform 4." evidence="16">
    <original>RHKLLKLSVLLPLIFTILLLLLVAASLLAWRMMKYQQKAAGMS</original>
    <variation>SSRDVPRAGTAAPGGRPLLCRPDPAAGRNLPAKGYHEAFLCPG</variation>
    <location>
        <begin position="149"/>
        <end position="191"/>
    </location>
</feature>
<feature type="splice variant" id="VSP_020059" description="In isoform 5." evidence="15">
    <original>HKLLKLSVLLPLIFTILLLLLVAASLLAWRMMKYQQKAAGMSPEQVLQPLEGDLCYADLTLQLAGTSPQKATTKLSSAQVDQVEVEYVTMASLPK</original>
    <variation>SEGSQAANYRPAAHQAQAPEAQCPPAPHLHHIAAAFGGRLTLGLEDDEVPAESSRDVPRAGTAAPGGRPLLCRPDPAAGRNLPAKGYHEAFLCPG</variation>
    <location>
        <begin position="150"/>
        <end position="244"/>
    </location>
</feature>
<feature type="splice variant" id="VSP_020060" description="In isoform 3." evidence="17">
    <original>HKLLKLSVLLPLI</original>
    <variation>YCSPWRATSAMQT</variation>
    <location>
        <begin position="150"/>
        <end position="162"/>
    </location>
</feature>
<feature type="splice variant" id="VSP_020061" description="In isoform 3." evidence="17">
    <location>
        <begin position="163"/>
        <end position="290"/>
    </location>
</feature>
<feature type="splice variant" id="VSP_020062" description="In isoform 2." evidence="18">
    <original>AAGMSPEQVLQPLEGDLCYADLTLQLAGTSPQKAT</original>
    <variation>GTAAPGGRPLLCRPDPAAGRNLPAKGYHEAFLCPG</variation>
    <location>
        <begin position="187"/>
        <end position="221"/>
    </location>
</feature>
<feature type="splice variant" id="VSP_020063" description="In isoform 4." evidence="16">
    <location>
        <begin position="192"/>
        <end position="290"/>
    </location>
</feature>
<feature type="splice variant" id="VSP_020064" description="In isoform 2." evidence="18">
    <location>
        <begin position="222"/>
        <end position="290"/>
    </location>
</feature>
<feature type="splice variant" id="VSP_020065" description="In isoform 5." evidence="15">
    <location>
        <begin position="245"/>
        <end position="290"/>
    </location>
</feature>
<feature type="sequence variant" id="VAR_039128" description="In dbSNP:rs35489971." evidence="5 6 7 9 10 14">
    <original>V</original>
    <variation>A</variation>
    <location>
        <position position="19"/>
    </location>
</feature>
<feature type="sequence variant" id="VAR_027152" description="In dbSNP:rs2034310." evidence="5 6 7 10">
    <original>Q</original>
    <variation>R</variation>
    <location>
        <position position="218"/>
    </location>
</feature>
<feature type="mutagenesis site" description="No interaction with PTPN6." evidence="10">
    <original>Y</original>
    <variation>F</variation>
    <location>
        <position position="205"/>
    </location>
</feature>
<feature type="mutagenesis site" description="Interaction with PTPN6." evidence="10">
    <original>Y</original>
    <variation>F</variation>
    <location>
        <position position="249"/>
    </location>
</feature>
<feature type="mutagenesis site" description="Interaction with PTPN6." evidence="10">
    <original>Y</original>
    <variation>F</variation>
    <location>
        <position position="284"/>
    </location>
</feature>
<feature type="sequence conflict" description="In Ref. 5; AAZ81566." evidence="19" ref="5">
    <original>T</original>
    <variation>A</variation>
    <location>
        <position position="37"/>
    </location>
</feature>
<feature type="sequence conflict" description="In Ref. 5; AAZ81566." evidence="19" ref="5">
    <original>I</original>
    <variation>V</variation>
    <location>
        <position position="64"/>
    </location>
</feature>
<feature type="sequence conflict" description="In Ref. 2; AAP42153." evidence="19" ref="2">
    <original>D</original>
    <variation>N</variation>
    <location>
        <position position="78"/>
    </location>
</feature>
<feature type="sequence conflict" description="In Ref. 2; AAP42152." evidence="19" ref="2">
    <original>T</original>
    <variation>I</variation>
    <location>
        <position position="135"/>
    </location>
</feature>
<feature type="sequence conflict" description="In Ref. 1; AAM19099." evidence="19" ref="1">
    <original>S</original>
    <variation>F</variation>
    <location>
        <position position="138"/>
    </location>
</feature>
<feature type="sequence conflict" description="In Ref. 2; AAP42152." evidence="19" ref="2">
    <original>L</original>
    <variation>Q</variation>
    <location>
        <position position="212"/>
    </location>
</feature>
<feature type="sequence conflict" description="In Ref. 2; AAP57942." evidence="19" ref="2">
    <original>H</original>
    <variation>R</variation>
    <location>
        <position position="268"/>
    </location>
</feature>
<feature type="strand" evidence="20">
    <location>
        <begin position="21"/>
        <end position="23"/>
    </location>
</feature>
<feature type="strand" evidence="20">
    <location>
        <begin position="26"/>
        <end position="31"/>
    </location>
</feature>
<feature type="strand" evidence="20">
    <location>
        <begin position="36"/>
        <end position="42"/>
    </location>
</feature>
<feature type="strand" evidence="20">
    <location>
        <begin position="49"/>
        <end position="59"/>
    </location>
</feature>
<feature type="strand" evidence="20">
    <location>
        <begin position="63"/>
        <end position="67"/>
    </location>
</feature>
<feature type="strand" evidence="20">
    <location>
        <begin position="70"/>
        <end position="72"/>
    </location>
</feature>
<feature type="strand" evidence="20">
    <location>
        <begin position="75"/>
        <end position="77"/>
    </location>
</feature>
<feature type="strand" evidence="20">
    <location>
        <begin position="80"/>
        <end position="85"/>
    </location>
</feature>
<feature type="turn" evidence="20">
    <location>
        <begin position="86"/>
        <end position="89"/>
    </location>
</feature>
<feature type="strand" evidence="20">
    <location>
        <begin position="90"/>
        <end position="95"/>
    </location>
</feature>
<feature type="helix" evidence="20">
    <location>
        <begin position="100"/>
        <end position="102"/>
    </location>
</feature>
<feature type="strand" evidence="20">
    <location>
        <begin position="104"/>
        <end position="112"/>
    </location>
</feature>
<feature type="strand" evidence="20">
    <location>
        <begin position="115"/>
        <end position="126"/>
    </location>
</feature>
<evidence type="ECO:0000250" key="1">
    <source>
        <dbReference type="UniProtKB" id="Q6SJQ7"/>
    </source>
</evidence>
<evidence type="ECO:0000255" key="2"/>
<evidence type="ECO:0000255" key="3">
    <source>
        <dbReference type="PROSITE-ProRule" id="PRU00114"/>
    </source>
</evidence>
<evidence type="ECO:0000256" key="4">
    <source>
        <dbReference type="SAM" id="MobiDB-lite"/>
    </source>
</evidence>
<evidence type="ECO:0000269" key="5">
    <source>
    </source>
</evidence>
<evidence type="ECO:0000269" key="6">
    <source>
    </source>
</evidence>
<evidence type="ECO:0000269" key="7">
    <source>
    </source>
</evidence>
<evidence type="ECO:0000269" key="8">
    <source>
    </source>
</evidence>
<evidence type="ECO:0000269" key="9">
    <source>
    </source>
</evidence>
<evidence type="ECO:0000269" key="10">
    <source>
    </source>
</evidence>
<evidence type="ECO:0000269" key="11">
    <source>
    </source>
</evidence>
<evidence type="ECO:0000269" key="12">
    <source>
    </source>
</evidence>
<evidence type="ECO:0000269" key="13">
    <source>
    </source>
</evidence>
<evidence type="ECO:0000269" key="14">
    <source ref="5"/>
</evidence>
<evidence type="ECO:0000303" key="15">
    <source>
    </source>
</evidence>
<evidence type="ECO:0000303" key="16">
    <source>
    </source>
</evidence>
<evidence type="ECO:0000303" key="17">
    <source>
    </source>
</evidence>
<evidence type="ECO:0000303" key="18">
    <source ref="5"/>
</evidence>
<evidence type="ECO:0000305" key="19"/>
<evidence type="ECO:0007829" key="20">
    <source>
        <dbReference type="PDB" id="2NMS"/>
    </source>
</evidence>
<accession>Q8TDQ1</accession>
<accession>B2RCL2</accession>
<accession>C9JDN3</accession>
<accession>Q3Y6P0</accession>
<accession>Q6UX24</accession>
<accession>Q7Z6A6</accession>
<accession>Q7Z7I4</accession>
<accession>Q7Z7I5</accession>
<accession>Q8N6D0</accession>
<accession>Q8NAF5</accession>
<reference key="1">
    <citation type="journal article" date="2004" name="Biochem. Biophys. Res. Commun.">
        <title>IgSF13, a novel human inhibitory receptor of the immunoglobulin superfamily, is preferentially expressed in dendritic cells and monocytes.</title>
        <authorList>
            <person name="Sui L."/>
            <person name="Li N."/>
            <person name="Liu Q."/>
            <person name="Zhang W."/>
            <person name="Wan T."/>
            <person name="Wang B."/>
            <person name="Luo K."/>
            <person name="Sun H."/>
            <person name="Cao X."/>
        </authorList>
    </citation>
    <scope>NUCLEOTIDE SEQUENCE [MRNA] (ISOFORM 1)</scope>
    <scope>TISSUE SPECIFICITY</scope>
    <scope>INTERACTION WITH PTPN6</scope>
    <scope>PHOSPHORYLATION</scope>
    <scope>VARIANTS ALA-19 AND ARG-218</scope>
</reference>
<reference key="2">
    <citation type="journal article" date="2004" name="Eur. J. Immunol.">
        <title>IREM-1 is a novel inhibitory receptor expressed by myeloid cells.</title>
        <authorList>
            <person name="Alvarez-Errico D."/>
            <person name="Aguilar H."/>
            <person name="Kitzig F."/>
            <person name="Brckalo T."/>
            <person name="Sayos J."/>
            <person name="Lopez-Botet M."/>
        </authorList>
    </citation>
    <scope>NUCLEOTIDE SEQUENCE [MRNA] (ISOFORMS 1; 3 AND 6)</scope>
    <scope>FUNCTION</scope>
    <scope>TISSUE SPECIFICITY</scope>
    <scope>INTERACTION WITH PTPN6</scope>
    <scope>SITE</scope>
    <scope>MUTAGENESIS OF TYR-205; TYR-249 AND TYR-284</scope>
    <scope>VARIANTS ALA-19 AND ARG-218</scope>
</reference>
<reference key="3">
    <citation type="journal article" date="2003" name="Genome Res.">
        <title>The secreted protein discovery initiative (SPDI), a large-scale effort to identify novel human secreted and transmembrane proteins: a bioinformatics assessment.</title>
        <authorList>
            <person name="Clark H.F."/>
            <person name="Gurney A.L."/>
            <person name="Abaya E."/>
            <person name="Baker K."/>
            <person name="Baldwin D.T."/>
            <person name="Brush J."/>
            <person name="Chen J."/>
            <person name="Chow B."/>
            <person name="Chui C."/>
            <person name="Crowley C."/>
            <person name="Currell B."/>
            <person name="Deuel B."/>
            <person name="Dowd P."/>
            <person name="Eaton D."/>
            <person name="Foster J.S."/>
            <person name="Grimaldi C."/>
            <person name="Gu Q."/>
            <person name="Hass P.E."/>
            <person name="Heldens S."/>
            <person name="Huang A."/>
            <person name="Kim H.S."/>
            <person name="Klimowski L."/>
            <person name="Jin Y."/>
            <person name="Johnson S."/>
            <person name="Lee J."/>
            <person name="Lewis L."/>
            <person name="Liao D."/>
            <person name="Mark M.R."/>
            <person name="Robbie E."/>
            <person name="Sanchez C."/>
            <person name="Schoenfeld J."/>
            <person name="Seshagiri S."/>
            <person name="Simmons L."/>
            <person name="Singh J."/>
            <person name="Smith V."/>
            <person name="Stinson J."/>
            <person name="Vagts A."/>
            <person name="Vandlen R.L."/>
            <person name="Watanabe C."/>
            <person name="Wieand D."/>
            <person name="Woods K."/>
            <person name="Xie M.-H."/>
            <person name="Yansura D.G."/>
            <person name="Yi S."/>
            <person name="Yu G."/>
            <person name="Yuan J."/>
            <person name="Zhang M."/>
            <person name="Zhang Z."/>
            <person name="Goddard A.D."/>
            <person name="Wood W.I."/>
            <person name="Godowski P.J."/>
            <person name="Gray A.M."/>
        </authorList>
    </citation>
    <scope>NUCLEOTIDE SEQUENCE [LARGE SCALE MRNA] (ISOFORM 1)</scope>
    <scope>VARIANTS ALA-19 AND ARG-218</scope>
</reference>
<reference key="4">
    <citation type="journal article" date="2004" name="Nat. Genet.">
        <title>Complete sequencing and characterization of 21,243 full-length human cDNAs.</title>
        <authorList>
            <person name="Ota T."/>
            <person name="Suzuki Y."/>
            <person name="Nishikawa T."/>
            <person name="Otsuki T."/>
            <person name="Sugiyama T."/>
            <person name="Irie R."/>
            <person name="Wakamatsu A."/>
            <person name="Hayashi K."/>
            <person name="Sato H."/>
            <person name="Nagai K."/>
            <person name="Kimura K."/>
            <person name="Makita H."/>
            <person name="Sekine M."/>
            <person name="Obayashi M."/>
            <person name="Nishi T."/>
            <person name="Shibahara T."/>
            <person name="Tanaka T."/>
            <person name="Ishii S."/>
            <person name="Yamamoto J."/>
            <person name="Saito K."/>
            <person name="Kawai Y."/>
            <person name="Isono Y."/>
            <person name="Nakamura Y."/>
            <person name="Nagahari K."/>
            <person name="Murakami K."/>
            <person name="Yasuda T."/>
            <person name="Iwayanagi T."/>
            <person name="Wagatsuma M."/>
            <person name="Shiratori A."/>
            <person name="Sudo H."/>
            <person name="Hosoiri T."/>
            <person name="Kaku Y."/>
            <person name="Kodaira H."/>
            <person name="Kondo H."/>
            <person name="Sugawara M."/>
            <person name="Takahashi M."/>
            <person name="Kanda K."/>
            <person name="Yokoi T."/>
            <person name="Furuya T."/>
            <person name="Kikkawa E."/>
            <person name="Omura Y."/>
            <person name="Abe K."/>
            <person name="Kamihara K."/>
            <person name="Katsuta N."/>
            <person name="Sato K."/>
            <person name="Tanikawa M."/>
            <person name="Yamazaki M."/>
            <person name="Ninomiya K."/>
            <person name="Ishibashi T."/>
            <person name="Yamashita H."/>
            <person name="Murakawa K."/>
            <person name="Fujimori K."/>
            <person name="Tanai H."/>
            <person name="Kimata M."/>
            <person name="Watanabe M."/>
            <person name="Hiraoka S."/>
            <person name="Chiba Y."/>
            <person name="Ishida S."/>
            <person name="Ono Y."/>
            <person name="Takiguchi S."/>
            <person name="Watanabe S."/>
            <person name="Yosida M."/>
            <person name="Hotuta T."/>
            <person name="Kusano J."/>
            <person name="Kanehori K."/>
            <person name="Takahashi-Fujii A."/>
            <person name="Hara H."/>
            <person name="Tanase T.-O."/>
            <person name="Nomura Y."/>
            <person name="Togiya S."/>
            <person name="Komai F."/>
            <person name="Hara R."/>
            <person name="Takeuchi K."/>
            <person name="Arita M."/>
            <person name="Imose N."/>
            <person name="Musashino K."/>
            <person name="Yuuki H."/>
            <person name="Oshima A."/>
            <person name="Sasaki N."/>
            <person name="Aotsuka S."/>
            <person name="Yoshikawa Y."/>
            <person name="Matsunawa H."/>
            <person name="Ichihara T."/>
            <person name="Shiohata N."/>
            <person name="Sano S."/>
            <person name="Moriya S."/>
            <person name="Momiyama H."/>
            <person name="Satoh N."/>
            <person name="Takami S."/>
            <person name="Terashima Y."/>
            <person name="Suzuki O."/>
            <person name="Nakagawa S."/>
            <person name="Senoh A."/>
            <person name="Mizoguchi H."/>
            <person name="Goto Y."/>
            <person name="Shimizu F."/>
            <person name="Wakebe H."/>
            <person name="Hishigaki H."/>
            <person name="Watanabe T."/>
            <person name="Sugiyama A."/>
            <person name="Takemoto M."/>
            <person name="Kawakami B."/>
            <person name="Yamazaki M."/>
            <person name="Watanabe K."/>
            <person name="Kumagai A."/>
            <person name="Itakura S."/>
            <person name="Fukuzumi Y."/>
            <person name="Fujimori Y."/>
            <person name="Komiyama M."/>
            <person name="Tashiro H."/>
            <person name="Tanigami A."/>
            <person name="Fujiwara T."/>
            <person name="Ono T."/>
            <person name="Yamada K."/>
            <person name="Fujii Y."/>
            <person name="Ozaki K."/>
            <person name="Hirao M."/>
            <person name="Ohmori Y."/>
            <person name="Kawabata A."/>
            <person name="Hikiji T."/>
            <person name="Kobatake N."/>
            <person name="Inagaki H."/>
            <person name="Ikema Y."/>
            <person name="Okamoto S."/>
            <person name="Okitani R."/>
            <person name="Kawakami T."/>
            <person name="Noguchi S."/>
            <person name="Itoh T."/>
            <person name="Shigeta K."/>
            <person name="Senba T."/>
            <person name="Matsumura K."/>
            <person name="Nakajima Y."/>
            <person name="Mizuno T."/>
            <person name="Morinaga M."/>
            <person name="Sasaki M."/>
            <person name="Togashi T."/>
            <person name="Oyama M."/>
            <person name="Hata H."/>
            <person name="Watanabe M."/>
            <person name="Komatsu T."/>
            <person name="Mizushima-Sugano J."/>
            <person name="Satoh T."/>
            <person name="Shirai Y."/>
            <person name="Takahashi Y."/>
            <person name="Nakagawa K."/>
            <person name="Okumura K."/>
            <person name="Nagase T."/>
            <person name="Nomura N."/>
            <person name="Kikuchi H."/>
            <person name="Masuho Y."/>
            <person name="Yamashita R."/>
            <person name="Nakai K."/>
            <person name="Yada T."/>
            <person name="Nakamura Y."/>
            <person name="Ohara O."/>
            <person name="Isogai T."/>
            <person name="Sugano S."/>
        </authorList>
    </citation>
    <scope>NUCLEOTIDE SEQUENCE [LARGE SCALE MRNA] (ISOFORMS 1 AND 5)</scope>
    <scope>VARIANTS ALA-19 AND ARG-218</scope>
    <source>
        <tissue>Small intestine</tissue>
        <tissue>Umbilical cord blood</tissue>
    </source>
</reference>
<reference key="5">
    <citation type="submission" date="2005-08" db="EMBL/GenBank/DDBJ databases">
        <authorList>
            <person name="Lin L."/>
            <person name="Nong W."/>
            <person name="Zhou G."/>
            <person name="Ke R."/>
            <person name="Shen C."/>
            <person name="Zhong G."/>
            <person name="Zheng Z."/>
            <person name="Liang M."/>
            <person name="Tang Z."/>
            <person name="Wen S."/>
            <person name="Li H."/>
            <person name="Yang S."/>
        </authorList>
    </citation>
    <scope>NUCLEOTIDE SEQUENCE [LARGE SCALE MRNA] (ISOFORM 2)</scope>
    <scope>VARIANT ALA-19</scope>
</reference>
<reference key="6">
    <citation type="journal article" date="2006" name="Nature">
        <title>DNA sequence of human chromosome 17 and analysis of rearrangement in the human lineage.</title>
        <authorList>
            <person name="Zody M.C."/>
            <person name="Garber M."/>
            <person name="Adams D.J."/>
            <person name="Sharpe T."/>
            <person name="Harrow J."/>
            <person name="Lupski J.R."/>
            <person name="Nicholson C."/>
            <person name="Searle S.M."/>
            <person name="Wilming L."/>
            <person name="Young S.K."/>
            <person name="Abouelleil A."/>
            <person name="Allen N.R."/>
            <person name="Bi W."/>
            <person name="Bloom T."/>
            <person name="Borowsky M.L."/>
            <person name="Bugalter B.E."/>
            <person name="Butler J."/>
            <person name="Chang J.L."/>
            <person name="Chen C.-K."/>
            <person name="Cook A."/>
            <person name="Corum B."/>
            <person name="Cuomo C.A."/>
            <person name="de Jong P.J."/>
            <person name="DeCaprio D."/>
            <person name="Dewar K."/>
            <person name="FitzGerald M."/>
            <person name="Gilbert J."/>
            <person name="Gibson R."/>
            <person name="Gnerre S."/>
            <person name="Goldstein S."/>
            <person name="Grafham D.V."/>
            <person name="Grocock R."/>
            <person name="Hafez N."/>
            <person name="Hagopian D.S."/>
            <person name="Hart E."/>
            <person name="Norman C.H."/>
            <person name="Humphray S."/>
            <person name="Jaffe D.B."/>
            <person name="Jones M."/>
            <person name="Kamal M."/>
            <person name="Khodiyar V.K."/>
            <person name="LaButti K."/>
            <person name="Laird G."/>
            <person name="Lehoczky J."/>
            <person name="Liu X."/>
            <person name="Lokyitsang T."/>
            <person name="Loveland J."/>
            <person name="Lui A."/>
            <person name="Macdonald P."/>
            <person name="Major J.E."/>
            <person name="Matthews L."/>
            <person name="Mauceli E."/>
            <person name="McCarroll S.A."/>
            <person name="Mihalev A.H."/>
            <person name="Mudge J."/>
            <person name="Nguyen C."/>
            <person name="Nicol R."/>
            <person name="O'Leary S.B."/>
            <person name="Osoegawa K."/>
            <person name="Schwartz D.C."/>
            <person name="Shaw-Smith C."/>
            <person name="Stankiewicz P."/>
            <person name="Steward C."/>
            <person name="Swarbreck D."/>
            <person name="Venkataraman V."/>
            <person name="Whittaker C.A."/>
            <person name="Yang X."/>
            <person name="Zimmer A.R."/>
            <person name="Bradley A."/>
            <person name="Hubbard T."/>
            <person name="Birren B.W."/>
            <person name="Rogers J."/>
            <person name="Lander E.S."/>
            <person name="Nusbaum C."/>
        </authorList>
    </citation>
    <scope>NUCLEOTIDE SEQUENCE [LARGE SCALE GENOMIC DNA]</scope>
</reference>
<reference key="7">
    <citation type="journal article" date="2004" name="Genome Res.">
        <title>The status, quality, and expansion of the NIH full-length cDNA project: the Mammalian Gene Collection (MGC).</title>
        <authorList>
            <consortium name="The MGC Project Team"/>
        </authorList>
    </citation>
    <scope>NUCLEOTIDE SEQUENCE [LARGE SCALE MRNA] (ISOFORM 4)</scope>
    <scope>VARIANT ALA-19</scope>
    <source>
        <tissue>Lung</tissue>
    </source>
</reference>
<reference key="8">
    <citation type="journal article" date="2004" name="Protein Sci.">
        <title>Signal peptide prediction based on analysis of experimentally verified cleavage sites.</title>
        <authorList>
            <person name="Zhang Z."/>
            <person name="Henzel W.J."/>
        </authorList>
    </citation>
    <scope>PROTEIN SEQUENCE OF 20-34</scope>
</reference>
<reference key="9">
    <citation type="journal article" date="2012" name="Immunology">
        <title>CD300a and CD300f differentially regulate the MyD88 and TRIF-mediated TLR signalling pathways through activation of SHP-1 and/or SHP-2 in human monocytic cell lines.</title>
        <authorList>
            <person name="Kim E.J."/>
            <person name="Lee S.M."/>
            <person name="Suk K."/>
            <person name="Lee W.H."/>
        </authorList>
    </citation>
    <scope>FUNCTION</scope>
</reference>
<reference key="10">
    <citation type="journal article" date="2014" name="J. Allergy Clin. Immunol.">
        <title>Sphingomyelin and ceramide are physiological ligands for human LMIR3/CD300f, inhibiting FcepsilonRI-mediated mast cell activation.</title>
        <authorList>
            <person name="Izawa K."/>
            <person name="Isobe M."/>
            <person name="Matsukawa T."/>
            <person name="Ito S."/>
            <person name="Maehara A."/>
            <person name="Takahashi M."/>
            <person name="Yamanishi Y."/>
            <person name="Kaitani A."/>
            <person name="Oki T."/>
            <person name="Okumura K."/>
            <person name="Kitamura T."/>
            <person name="Kitaura J."/>
        </authorList>
    </citation>
    <scope>FUNCTION</scope>
    <scope>CERAMIDE-BINDING</scope>
    <scope>SPHINGOMYELIN-BINDING</scope>
</reference>
<reference key="11">
    <citation type="journal article" date="2007" name="J. Mol. Biol.">
        <title>The crystal structure of the extracellular domain of the inhibitor receptor expressed on myeloid cells IREM-1.</title>
        <authorList>
            <person name="Marquez J.A."/>
            <person name="Galfre E."/>
            <person name="Dupeux F."/>
            <person name="Flot D."/>
            <person name="Moran O."/>
            <person name="Dimasi N."/>
        </authorList>
    </citation>
    <scope>X-RAY CRYSTALLOGRAPHY (2.6 ANGSTROMS) OF 21-140</scope>
    <scope>DISULFIDE BONDS</scope>
</reference>
<organism>
    <name type="scientific">Homo sapiens</name>
    <name type="common">Human</name>
    <dbReference type="NCBI Taxonomy" id="9606"/>
    <lineage>
        <taxon>Eukaryota</taxon>
        <taxon>Metazoa</taxon>
        <taxon>Chordata</taxon>
        <taxon>Craniata</taxon>
        <taxon>Vertebrata</taxon>
        <taxon>Euteleostomi</taxon>
        <taxon>Mammalia</taxon>
        <taxon>Eutheria</taxon>
        <taxon>Euarchontoglires</taxon>
        <taxon>Primates</taxon>
        <taxon>Haplorrhini</taxon>
        <taxon>Catarrhini</taxon>
        <taxon>Hominidae</taxon>
        <taxon>Homo</taxon>
    </lineage>
</organism>
<keyword id="KW-0002">3D-structure</keyword>
<keyword id="KW-0025">Alternative splicing</keyword>
<keyword id="KW-1003">Cell membrane</keyword>
<keyword id="KW-0903">Direct protein sequencing</keyword>
<keyword id="KW-1015">Disulfide bond</keyword>
<keyword id="KW-0325">Glycoprotein</keyword>
<keyword id="KW-0391">Immunity</keyword>
<keyword id="KW-0393">Immunoglobulin domain</keyword>
<keyword id="KW-0446">Lipid-binding</keyword>
<keyword id="KW-0472">Membrane</keyword>
<keyword id="KW-0597">Phosphoprotein</keyword>
<keyword id="KW-1267">Proteomics identification</keyword>
<keyword id="KW-0675">Receptor</keyword>
<keyword id="KW-1185">Reference proteome</keyword>
<keyword id="KW-0732">Signal</keyword>
<keyword id="KW-0812">Transmembrane</keyword>
<keyword id="KW-1133">Transmembrane helix</keyword>
<proteinExistence type="evidence at protein level"/>
<name>CLM1_HUMAN</name>
<comment type="function">
    <text evidence="1 10 12 13">Acts as an inhibitory receptor for myeloid cells and mast cells (PubMed:15549731). Positively regulates the phagocytosis of apoptotic cells (efferocytosis) via phosphatidylserine (PS) recognition; recognizes and binds PS as a ligand which is expressed on the surface of apoptotic cells. Plays an important role in the maintenance of immune homeostasis, by promoting macrophage-mediated efferocytosis and by inhibiting dendritic cell-mediated efferocytosis (By similarity). Negatively regulates Fc epsilon receptor-dependent mast cell activation and allergic responses via binding to ceramide and sphingomyelin which act as ligands (PubMed:24035150). May act as a coreceptor for interleukin 4 (IL-4). Associates with and regulates IL-4 receptor alpha-mediated responses by augmenting IL-4- and IL-13-induced signaling (By similarity). Negatively regulates the Toll-like receptor (TLR) signaling mediated by MYD88 and TRIF through activation of PTPN6/SHP-1 and PTPN11/SHP-2 (PubMed:22043923). Inhibits osteoclast formation. Induces macrophage cell death upon engagement (By similarity).</text>
</comment>
<comment type="subunit">
    <text evidence="1 7 10">Interacts with PTPN6/SHP-1 in a tyrosine phosphorylation dependent manner (PubMed:15184070, PubMed:15549731). Interacts with IL4R (By similarity).</text>
</comment>
<comment type="interaction">
    <interactant intactId="EBI-7381492">
        <id>Q8TDQ1</id>
    </interactant>
    <interactant intactId="EBI-26499879">
        <id>A8K4G0</id>
        <label>CD300LB</label>
    </interactant>
    <organismsDiffer>false</organismsDiffer>
    <experiments>3</experiments>
</comment>
<comment type="interaction">
    <interactant intactId="EBI-7381492">
        <id>Q8TDQ1</id>
    </interactant>
    <interactant intactId="EBI-7381492">
        <id>Q8TDQ1</id>
        <label>CD300LF</label>
    </interactant>
    <organismsDiffer>false</organismsDiffer>
    <experiments>3</experiments>
</comment>
<comment type="interaction">
    <interactant intactId="EBI-17784261">
        <id>Q8TDQ1-4</id>
    </interactant>
    <interactant intactId="EBI-12111538">
        <id>Q8IY57-5</id>
        <label>YAF2</label>
    </interactant>
    <organismsDiffer>false</organismsDiffer>
    <experiments>3</experiments>
</comment>
<comment type="subcellular location">
    <subcellularLocation>
        <location evidence="19">Cell membrane</location>
        <topology evidence="19">Single-pass type I membrane protein</topology>
    </subcellularLocation>
</comment>
<comment type="alternative products">
    <event type="alternative splicing"/>
    <isoform>
        <id>Q8TDQ1-1</id>
        <name>1</name>
        <sequence type="displayed"/>
    </isoform>
    <isoform>
        <id>Q8TDQ1-2</id>
        <name>2</name>
        <sequence type="described" ref="VSP_020056 VSP_020057 VSP_020062 VSP_020064"/>
    </isoform>
    <isoform>
        <id>Q8TDQ1-3</id>
        <name>3</name>
        <sequence type="described" ref="VSP_020056 VSP_020060 VSP_020061"/>
    </isoform>
    <isoform>
        <id>Q8TDQ1-4</id>
        <name>4</name>
        <sequence type="described" ref="VSP_020056 VSP_020058 VSP_020063"/>
    </isoform>
    <isoform>
        <id>Q8TDQ1-5</id>
        <name>5</name>
        <sequence type="described" ref="VSP_020059 VSP_020065"/>
    </isoform>
    <isoform>
        <id>Q8TDQ1-6</id>
        <name>6</name>
        <sequence type="described" ref="VSP_020056"/>
    </isoform>
</comment>
<comment type="tissue specificity">
    <text evidence="7 10">Highly expressed in spleen, peripheral blood leukocyte and monocyte, and lung. Weakly expressed in thymus, heart, brain, placenta, liver, skeletal muscle, kidney, pancreas, prostate, testis, ovary, small intestine or colon. Expressed selectively in monocytes and monocyte-related cells.</text>
</comment>
<comment type="PTM">
    <text evidence="7">Phosphorylated on tyrosine.</text>
</comment>
<comment type="similarity">
    <text evidence="19">Belongs to the CD300 family.</text>
</comment>
<sequence>MPLLTLYLLLFWLSGYSIVTQITGPTTVNGLERGSLTVQCVYRSGWETYLKWWCRGAIWRDCKILVKTSGSEQEVKRDRVSIKDNQKNRTFTVTMEDLMKTDADTYWCGIEKTGNDLGVTVQVTIDPAPVTQEETSSSPTLTGHHLDNRHKLLKLSVLLPLIFTILLLLLVAASLLAWRMMKYQQKAAGMSPEQVLQPLEGDLCYADLTLQLAGTSPQKATTKLSSAQVDQVEVEYVTMASLPKEDISYASLTLGAEDQEPTYCNMGHLSSHLPGRGPEEPTEYSTISRP</sequence>
<dbReference type="EMBL" id="AF251706">
    <property type="protein sequence ID" value="AAM19099.1"/>
    <property type="molecule type" value="mRNA"/>
</dbReference>
<dbReference type="EMBL" id="AF375480">
    <property type="protein sequence ID" value="AAP42152.1"/>
    <property type="molecule type" value="mRNA"/>
</dbReference>
<dbReference type="EMBL" id="AF375481">
    <property type="protein sequence ID" value="AAP42153.1"/>
    <property type="molecule type" value="mRNA"/>
</dbReference>
<dbReference type="EMBL" id="AY303545">
    <property type="protein sequence ID" value="AAP57942.1"/>
    <property type="molecule type" value="mRNA"/>
</dbReference>
<dbReference type="EMBL" id="AY358545">
    <property type="protein sequence ID" value="AAQ88909.1"/>
    <property type="molecule type" value="mRNA"/>
</dbReference>
<dbReference type="EMBL" id="AK092757">
    <property type="protein sequence ID" value="BAC03966.1"/>
    <property type="molecule type" value="mRNA"/>
</dbReference>
<dbReference type="EMBL" id="AK315165">
    <property type="protein sequence ID" value="BAG37609.1"/>
    <property type="molecule type" value="mRNA"/>
</dbReference>
<dbReference type="EMBL" id="DQ153249">
    <property type="protein sequence ID" value="AAZ81566.1"/>
    <property type="molecule type" value="mRNA"/>
</dbReference>
<dbReference type="EMBL" id="AC016888">
    <property type="status" value="NOT_ANNOTATED_CDS"/>
    <property type="molecule type" value="Genomic_DNA"/>
</dbReference>
<dbReference type="EMBL" id="AC064805">
    <property type="status" value="NOT_ANNOTATED_CDS"/>
    <property type="molecule type" value="Genomic_DNA"/>
</dbReference>
<dbReference type="EMBL" id="BC028199">
    <property type="protein sequence ID" value="AAH28199.1"/>
    <property type="molecule type" value="mRNA"/>
</dbReference>
<dbReference type="CCDS" id="CCDS11704.1">
    <molecule id="Q8TDQ1-1"/>
</dbReference>
<dbReference type="CCDS" id="CCDS74148.1">
    <molecule id="Q8TDQ1-4"/>
</dbReference>
<dbReference type="CCDS" id="CCDS74149.1">
    <molecule id="Q8TDQ1-6"/>
</dbReference>
<dbReference type="CCDS" id="CCDS74150.1">
    <molecule id="Q8TDQ1-2"/>
</dbReference>
<dbReference type="CCDS" id="CCDS74151.1">
    <molecule id="Q8TDQ1-5"/>
</dbReference>
<dbReference type="RefSeq" id="NP_001276011.1">
    <molecule id="Q8TDQ1-4"/>
    <property type="nucleotide sequence ID" value="NM_001289082.2"/>
</dbReference>
<dbReference type="RefSeq" id="NP_001276012.1">
    <molecule id="Q8TDQ1-5"/>
    <property type="nucleotide sequence ID" value="NM_001289083.2"/>
</dbReference>
<dbReference type="RefSeq" id="NP_001276013.1">
    <property type="nucleotide sequence ID" value="NM_001289084.1"/>
</dbReference>
<dbReference type="RefSeq" id="NP_001276014.1">
    <molecule id="Q8TDQ1-6"/>
    <property type="nucleotide sequence ID" value="NM_001289085.2"/>
</dbReference>
<dbReference type="RefSeq" id="NP_001276015.1">
    <molecule id="Q8TDQ1-2"/>
    <property type="nucleotide sequence ID" value="NM_001289086.2"/>
</dbReference>
<dbReference type="RefSeq" id="NP_001276016.1">
    <property type="nucleotide sequence ID" value="NM_001289087.1"/>
</dbReference>
<dbReference type="RefSeq" id="NP_620587.2">
    <molecule id="Q8TDQ1-1"/>
    <property type="nucleotide sequence ID" value="NM_139018.4"/>
</dbReference>
<dbReference type="RefSeq" id="XP_047291373.1">
    <molecule id="Q8TDQ1-6"/>
    <property type="nucleotide sequence ID" value="XM_047435417.1"/>
</dbReference>
<dbReference type="RefSeq" id="XP_047291377.1">
    <molecule id="Q8TDQ1-2"/>
    <property type="nucleotide sequence ID" value="XM_047435421.1"/>
</dbReference>
<dbReference type="PDB" id="2NMS">
    <property type="method" value="X-ray"/>
    <property type="resolution" value="2.60 A"/>
    <property type="chains" value="A=21-140"/>
</dbReference>
<dbReference type="PDBsum" id="2NMS"/>
<dbReference type="SMR" id="Q8TDQ1"/>
<dbReference type="BioGRID" id="127005">
    <property type="interactions" value="6"/>
</dbReference>
<dbReference type="FunCoup" id="Q8TDQ1">
    <property type="interactions" value="593"/>
</dbReference>
<dbReference type="IntAct" id="Q8TDQ1">
    <property type="interactions" value="7"/>
</dbReference>
<dbReference type="MINT" id="Q8TDQ1"/>
<dbReference type="STRING" id="9606.ENSP00000462309"/>
<dbReference type="GlyCosmos" id="Q8TDQ1">
    <property type="glycosylation" value="5 sites, 4 glycans"/>
</dbReference>
<dbReference type="GlyGen" id="Q8TDQ1">
    <property type="glycosylation" value="6 sites, 5 O-linked glycans (5 sites)"/>
</dbReference>
<dbReference type="iPTMnet" id="Q8TDQ1"/>
<dbReference type="PhosphoSitePlus" id="Q8TDQ1"/>
<dbReference type="BioMuta" id="CD300LF"/>
<dbReference type="DMDM" id="296439398"/>
<dbReference type="MassIVE" id="Q8TDQ1"/>
<dbReference type="PaxDb" id="9606-ENSP00000462309"/>
<dbReference type="PeptideAtlas" id="Q8TDQ1"/>
<dbReference type="ProteomicsDB" id="74321">
    <molecule id="Q8TDQ1-1"/>
</dbReference>
<dbReference type="ProteomicsDB" id="74322">
    <molecule id="Q8TDQ1-2"/>
</dbReference>
<dbReference type="ProteomicsDB" id="74323">
    <molecule id="Q8TDQ1-3"/>
</dbReference>
<dbReference type="ProteomicsDB" id="74324">
    <molecule id="Q8TDQ1-4"/>
</dbReference>
<dbReference type="ProteomicsDB" id="74325">
    <molecule id="Q8TDQ1-5"/>
</dbReference>
<dbReference type="ProteomicsDB" id="74326">
    <molecule id="Q8TDQ1-6"/>
</dbReference>
<dbReference type="TopDownProteomics" id="Q8TDQ1-4">
    <molecule id="Q8TDQ1-4"/>
</dbReference>
<dbReference type="Antibodypedia" id="53166">
    <property type="antibodies" value="320 antibodies from 30 providers"/>
</dbReference>
<dbReference type="DNASU" id="146722"/>
<dbReference type="Ensembl" id="ENST00000301573.13">
    <molecule id="Q8TDQ1-5"/>
    <property type="protein sequence ID" value="ENSP00000301573.9"/>
    <property type="gene ID" value="ENSG00000186074.19"/>
</dbReference>
<dbReference type="Ensembl" id="ENST00000326165.11">
    <molecule id="Q8TDQ1-1"/>
    <property type="protein sequence ID" value="ENSP00000327075.6"/>
    <property type="gene ID" value="ENSG00000186074.19"/>
</dbReference>
<dbReference type="Ensembl" id="ENST00000343125.8">
    <molecule id="Q8TDQ1-4"/>
    <property type="protein sequence ID" value="ENSP00000343751.4"/>
    <property type="gene ID" value="ENSG00000186074.19"/>
</dbReference>
<dbReference type="Ensembl" id="ENST00000361254.8">
    <molecule id="Q8TDQ1-2"/>
    <property type="protein sequence ID" value="ENSP00000355294.4"/>
    <property type="gene ID" value="ENSG00000186074.19"/>
</dbReference>
<dbReference type="Ensembl" id="ENST00000462044.5">
    <molecule id="Q8TDQ1-3"/>
    <property type="protein sequence ID" value="ENSP00000464223.1"/>
    <property type="gene ID" value="ENSG00000186074.19"/>
</dbReference>
<dbReference type="Ensembl" id="ENST00000464910.5">
    <molecule id="Q8TDQ1-6"/>
    <property type="protein sequence ID" value="ENSP00000464257.1"/>
    <property type="gene ID" value="ENSG00000186074.19"/>
</dbReference>
<dbReference type="Ensembl" id="ENST00000469092.5">
    <molecule id="Q8TDQ1-4"/>
    <property type="protein sequence ID" value="ENSP00000463743.1"/>
    <property type="gene ID" value="ENSG00000186074.19"/>
</dbReference>
<dbReference type="Ensembl" id="ENST00000581500.1">
    <molecule id="Q8TDQ1-2"/>
    <property type="protein sequence ID" value="ENSP00000464610.1"/>
    <property type="gene ID" value="ENSG00000186074.19"/>
</dbReference>
<dbReference type="GeneID" id="146722"/>
<dbReference type="KEGG" id="hsa:146722"/>
<dbReference type="MANE-Select" id="ENST00000326165.11">
    <property type="protein sequence ID" value="ENSP00000327075.6"/>
    <property type="RefSeq nucleotide sequence ID" value="NM_139018.5"/>
    <property type="RefSeq protein sequence ID" value="NP_620587.2"/>
</dbReference>
<dbReference type="UCSC" id="uc002jlg.5">
    <molecule id="Q8TDQ1-1"/>
    <property type="organism name" value="human"/>
</dbReference>
<dbReference type="AGR" id="HGNC:29883"/>
<dbReference type="CTD" id="146722"/>
<dbReference type="DisGeNET" id="146722"/>
<dbReference type="GeneCards" id="CD300LF"/>
<dbReference type="HGNC" id="HGNC:29883">
    <property type="gene designation" value="CD300LF"/>
</dbReference>
<dbReference type="HPA" id="ENSG00000186074">
    <property type="expression patterns" value="Group enriched (bone marrow, lung, lymphoid tissue)"/>
</dbReference>
<dbReference type="MIM" id="609807">
    <property type="type" value="gene"/>
</dbReference>
<dbReference type="neXtProt" id="NX_Q8TDQ1"/>
<dbReference type="OpenTargets" id="ENSG00000186074"/>
<dbReference type="PharmGKB" id="PA142672153"/>
<dbReference type="VEuPathDB" id="HostDB:ENSG00000186074"/>
<dbReference type="eggNOG" id="ENOG502S7MA">
    <property type="taxonomic scope" value="Eukaryota"/>
</dbReference>
<dbReference type="GeneTree" id="ENSGT00940000154332"/>
<dbReference type="HOGENOM" id="CLU_051023_4_0_1"/>
<dbReference type="InParanoid" id="Q8TDQ1"/>
<dbReference type="OrthoDB" id="8920197at2759"/>
<dbReference type="PAN-GO" id="Q8TDQ1">
    <property type="GO annotations" value="2 GO annotations based on evolutionary models"/>
</dbReference>
<dbReference type="PhylomeDB" id="Q8TDQ1"/>
<dbReference type="TreeFam" id="TF334441"/>
<dbReference type="PathwayCommons" id="Q8TDQ1"/>
<dbReference type="Reactome" id="R-HSA-198933">
    <property type="pathway name" value="Immunoregulatory interactions between a Lymphoid and a non-Lymphoid cell"/>
</dbReference>
<dbReference type="SignaLink" id="Q8TDQ1"/>
<dbReference type="SIGNOR" id="Q8TDQ1"/>
<dbReference type="BioGRID-ORCS" id="146722">
    <property type="hits" value="13 hits in 1142 CRISPR screens"/>
</dbReference>
<dbReference type="EvolutionaryTrace" id="Q8TDQ1"/>
<dbReference type="GeneWiki" id="CD300LF"/>
<dbReference type="GenomeRNAi" id="146722"/>
<dbReference type="Pharos" id="Q8TDQ1">
    <property type="development level" value="Tbio"/>
</dbReference>
<dbReference type="PRO" id="PR:Q8TDQ1"/>
<dbReference type="Proteomes" id="UP000005640">
    <property type="component" value="Chromosome 17"/>
</dbReference>
<dbReference type="RNAct" id="Q8TDQ1">
    <property type="molecule type" value="protein"/>
</dbReference>
<dbReference type="Bgee" id="ENSG00000186074">
    <property type="expression patterns" value="Expressed in monocyte and 109 other cell types or tissues"/>
</dbReference>
<dbReference type="ExpressionAtlas" id="Q8TDQ1">
    <property type="expression patterns" value="baseline and differential"/>
</dbReference>
<dbReference type="GO" id="GO:0005886">
    <property type="term" value="C:plasma membrane"/>
    <property type="evidence" value="ECO:0000318"/>
    <property type="project" value="GO_Central"/>
</dbReference>
<dbReference type="GO" id="GO:0097001">
    <property type="term" value="F:ceramide binding"/>
    <property type="evidence" value="ECO:0000314"/>
    <property type="project" value="UniProtKB"/>
</dbReference>
<dbReference type="GO" id="GO:0042802">
    <property type="term" value="F:identical protein binding"/>
    <property type="evidence" value="ECO:0000353"/>
    <property type="project" value="IntAct"/>
</dbReference>
<dbReference type="GO" id="GO:0005136">
    <property type="term" value="F:interleukin-4 receptor binding"/>
    <property type="evidence" value="ECO:0000250"/>
    <property type="project" value="UniProtKB"/>
</dbReference>
<dbReference type="GO" id="GO:0001786">
    <property type="term" value="F:phosphatidylserine binding"/>
    <property type="evidence" value="ECO:0000250"/>
    <property type="project" value="UniProtKB"/>
</dbReference>
<dbReference type="GO" id="GO:0004888">
    <property type="term" value="F:transmembrane signaling receptor activity"/>
    <property type="evidence" value="ECO:0000318"/>
    <property type="project" value="GO_Central"/>
</dbReference>
<dbReference type="GO" id="GO:0002757">
    <property type="term" value="P:immune response-activating signaling pathway"/>
    <property type="evidence" value="ECO:0000318"/>
    <property type="project" value="GO_Central"/>
</dbReference>
<dbReference type="GO" id="GO:0035772">
    <property type="term" value="P:interleukin-13-mediated signaling pathway"/>
    <property type="evidence" value="ECO:0000250"/>
    <property type="project" value="UniProtKB"/>
</dbReference>
<dbReference type="GO" id="GO:2000426">
    <property type="term" value="P:negative regulation of apoptotic cell clearance"/>
    <property type="evidence" value="ECO:0000250"/>
    <property type="project" value="UniProtKB"/>
</dbReference>
<dbReference type="GO" id="GO:0033004">
    <property type="term" value="P:negative regulation of mast cell activation"/>
    <property type="evidence" value="ECO:0000314"/>
    <property type="project" value="UniProtKB"/>
</dbReference>
<dbReference type="GO" id="GO:0034125">
    <property type="term" value="P:negative regulation of MyD88-dependent toll-like receptor signaling pathway"/>
    <property type="evidence" value="ECO:0000315"/>
    <property type="project" value="UniProtKB"/>
</dbReference>
<dbReference type="GO" id="GO:2000427">
    <property type="term" value="P:positive regulation of apoptotic cell clearance"/>
    <property type="evidence" value="ECO:0000250"/>
    <property type="project" value="UniProtKB"/>
</dbReference>
<dbReference type="GO" id="GO:1902216">
    <property type="term" value="P:positive regulation of interleukin-4-mediated signaling pathway"/>
    <property type="evidence" value="ECO:0000250"/>
    <property type="project" value="UniProtKB"/>
</dbReference>
<dbReference type="GO" id="GO:0035666">
    <property type="term" value="P:TRIF-dependent toll-like receptor signaling pathway"/>
    <property type="evidence" value="ECO:0000315"/>
    <property type="project" value="UniProtKB"/>
</dbReference>
<dbReference type="CDD" id="cd05716">
    <property type="entry name" value="IgV_pIgR_like"/>
    <property type="match status" value="1"/>
</dbReference>
<dbReference type="FunFam" id="2.60.40.10:FF:000370">
    <property type="entry name" value="CMRF35-like molecule 1"/>
    <property type="match status" value="1"/>
</dbReference>
<dbReference type="Gene3D" id="2.60.40.10">
    <property type="entry name" value="Immunoglobulins"/>
    <property type="match status" value="1"/>
</dbReference>
<dbReference type="InterPro" id="IPR050671">
    <property type="entry name" value="CD300_family_receptors"/>
</dbReference>
<dbReference type="InterPro" id="IPR007110">
    <property type="entry name" value="Ig-like_dom"/>
</dbReference>
<dbReference type="InterPro" id="IPR036179">
    <property type="entry name" value="Ig-like_dom_sf"/>
</dbReference>
<dbReference type="InterPro" id="IPR013783">
    <property type="entry name" value="Ig-like_fold"/>
</dbReference>
<dbReference type="InterPro" id="IPR003599">
    <property type="entry name" value="Ig_sub"/>
</dbReference>
<dbReference type="InterPro" id="IPR013106">
    <property type="entry name" value="Ig_V-set"/>
</dbReference>
<dbReference type="PANTHER" id="PTHR11860:SF101">
    <property type="entry name" value="CMRF35-LIKE MOLECULE 1"/>
    <property type="match status" value="1"/>
</dbReference>
<dbReference type="PANTHER" id="PTHR11860">
    <property type="entry name" value="POLYMERIC-IMMUNOGLOBULIN RECEPTOR"/>
    <property type="match status" value="1"/>
</dbReference>
<dbReference type="Pfam" id="PF15330">
    <property type="entry name" value="SIT"/>
    <property type="match status" value="1"/>
</dbReference>
<dbReference type="Pfam" id="PF07686">
    <property type="entry name" value="V-set"/>
    <property type="match status" value="1"/>
</dbReference>
<dbReference type="SMART" id="SM00409">
    <property type="entry name" value="IG"/>
    <property type="match status" value="1"/>
</dbReference>
<dbReference type="SUPFAM" id="SSF48726">
    <property type="entry name" value="Immunoglobulin"/>
    <property type="match status" value="1"/>
</dbReference>
<dbReference type="PROSITE" id="PS50835">
    <property type="entry name" value="IG_LIKE"/>
    <property type="match status" value="1"/>
</dbReference>
<gene>
    <name type="primary">CD300LF</name>
    <name type="synonym">CD300F</name>
    <name type="synonym">CLM1</name>
    <name type="synonym">IGSF13</name>
    <name type="synonym">IREM1</name>
    <name type="synonym">NKIR</name>
    <name type="ORF">UNQ3105/PRO10111</name>
</gene>
<protein>
    <recommendedName>
        <fullName>CMRF35-like molecule 1</fullName>
        <shortName>CLM-1</shortName>
    </recommendedName>
    <alternativeName>
        <fullName>CD300 antigen-like family member F</fullName>
    </alternativeName>
    <alternativeName>
        <fullName>Immune receptor expressed on myeloid cells 1</fullName>
        <shortName>IREM-1</shortName>
    </alternativeName>
    <alternativeName>
        <fullName>Immunoglobulin superfamily member 13</fullName>
        <shortName>IgSF13</shortName>
    </alternativeName>
    <alternativeName>
        <fullName>NK inhibitory receptor</fullName>
    </alternativeName>
    <cdAntigenName>CD300f</cdAntigenName>
</protein>